<feature type="chain" id="PRO_1000128127" description="Small ribosomal subunit protein uS9">
    <location>
        <begin position="1"/>
        <end position="130"/>
    </location>
</feature>
<feature type="region of interest" description="Disordered" evidence="2">
    <location>
        <begin position="102"/>
        <end position="130"/>
    </location>
</feature>
<feature type="compositionally biased region" description="Basic residues" evidence="2">
    <location>
        <begin position="111"/>
        <end position="130"/>
    </location>
</feature>
<reference key="1">
    <citation type="journal article" date="2008" name="DNA Res.">
        <title>Complete genome sequence of Finegoldia magna, an anaerobic opportunistic pathogen.</title>
        <authorList>
            <person name="Goto T."/>
            <person name="Yamashita A."/>
            <person name="Hirakawa H."/>
            <person name="Matsutani M."/>
            <person name="Todo K."/>
            <person name="Ohshima K."/>
            <person name="Toh H."/>
            <person name="Miyamoto K."/>
            <person name="Kuhara S."/>
            <person name="Hattori M."/>
            <person name="Shimizu T."/>
            <person name="Akimoto S."/>
        </authorList>
    </citation>
    <scope>NUCLEOTIDE SEQUENCE [LARGE SCALE GENOMIC DNA]</scope>
    <source>
        <strain>ATCC 29328 / DSM 20472 / WAL 2508</strain>
    </source>
</reference>
<accession>B0S3F6</accession>
<evidence type="ECO:0000255" key="1">
    <source>
        <dbReference type="HAMAP-Rule" id="MF_00532"/>
    </source>
</evidence>
<evidence type="ECO:0000256" key="2">
    <source>
        <dbReference type="SAM" id="MobiDB-lite"/>
    </source>
</evidence>
<evidence type="ECO:0000305" key="3"/>
<protein>
    <recommendedName>
        <fullName evidence="1">Small ribosomal subunit protein uS9</fullName>
    </recommendedName>
    <alternativeName>
        <fullName evidence="3">30S ribosomal protein S9</fullName>
    </alternativeName>
</protein>
<name>RS9_FINM2</name>
<proteinExistence type="inferred from homology"/>
<dbReference type="EMBL" id="AP008971">
    <property type="protein sequence ID" value="BAG08896.1"/>
    <property type="molecule type" value="Genomic_DNA"/>
</dbReference>
<dbReference type="RefSeq" id="WP_002838975.1">
    <property type="nucleotide sequence ID" value="NC_010376.1"/>
</dbReference>
<dbReference type="SMR" id="B0S3F6"/>
<dbReference type="STRING" id="334413.FMG_1478"/>
<dbReference type="KEGG" id="fma:FMG_1478"/>
<dbReference type="eggNOG" id="COG0103">
    <property type="taxonomic scope" value="Bacteria"/>
</dbReference>
<dbReference type="HOGENOM" id="CLU_046483_2_1_9"/>
<dbReference type="Proteomes" id="UP000001319">
    <property type="component" value="Chromosome"/>
</dbReference>
<dbReference type="GO" id="GO:0022627">
    <property type="term" value="C:cytosolic small ribosomal subunit"/>
    <property type="evidence" value="ECO:0007669"/>
    <property type="project" value="TreeGrafter"/>
</dbReference>
<dbReference type="GO" id="GO:0003723">
    <property type="term" value="F:RNA binding"/>
    <property type="evidence" value="ECO:0007669"/>
    <property type="project" value="TreeGrafter"/>
</dbReference>
<dbReference type="GO" id="GO:0003735">
    <property type="term" value="F:structural constituent of ribosome"/>
    <property type="evidence" value="ECO:0007669"/>
    <property type="project" value="InterPro"/>
</dbReference>
<dbReference type="GO" id="GO:0006412">
    <property type="term" value="P:translation"/>
    <property type="evidence" value="ECO:0007669"/>
    <property type="project" value="UniProtKB-UniRule"/>
</dbReference>
<dbReference type="FunFam" id="3.30.230.10:FF:000001">
    <property type="entry name" value="30S ribosomal protein S9"/>
    <property type="match status" value="1"/>
</dbReference>
<dbReference type="Gene3D" id="3.30.230.10">
    <property type="match status" value="1"/>
</dbReference>
<dbReference type="HAMAP" id="MF_00532_B">
    <property type="entry name" value="Ribosomal_uS9_B"/>
    <property type="match status" value="1"/>
</dbReference>
<dbReference type="InterPro" id="IPR020568">
    <property type="entry name" value="Ribosomal_Su5_D2-typ_SF"/>
</dbReference>
<dbReference type="InterPro" id="IPR000754">
    <property type="entry name" value="Ribosomal_uS9"/>
</dbReference>
<dbReference type="InterPro" id="IPR023035">
    <property type="entry name" value="Ribosomal_uS9_bac/plastid"/>
</dbReference>
<dbReference type="InterPro" id="IPR020574">
    <property type="entry name" value="Ribosomal_uS9_CS"/>
</dbReference>
<dbReference type="InterPro" id="IPR014721">
    <property type="entry name" value="Ribsml_uS5_D2-typ_fold_subgr"/>
</dbReference>
<dbReference type="NCBIfam" id="NF001099">
    <property type="entry name" value="PRK00132.1"/>
    <property type="match status" value="1"/>
</dbReference>
<dbReference type="PANTHER" id="PTHR21569">
    <property type="entry name" value="RIBOSOMAL PROTEIN S9"/>
    <property type="match status" value="1"/>
</dbReference>
<dbReference type="PANTHER" id="PTHR21569:SF1">
    <property type="entry name" value="SMALL RIBOSOMAL SUBUNIT PROTEIN US9M"/>
    <property type="match status" value="1"/>
</dbReference>
<dbReference type="Pfam" id="PF00380">
    <property type="entry name" value="Ribosomal_S9"/>
    <property type="match status" value="1"/>
</dbReference>
<dbReference type="SUPFAM" id="SSF54211">
    <property type="entry name" value="Ribosomal protein S5 domain 2-like"/>
    <property type="match status" value="1"/>
</dbReference>
<dbReference type="PROSITE" id="PS00360">
    <property type="entry name" value="RIBOSOMAL_S9"/>
    <property type="match status" value="1"/>
</dbReference>
<gene>
    <name evidence="1" type="primary">rpsI</name>
    <name type="ordered locus">FMG_1478</name>
</gene>
<organism>
    <name type="scientific">Finegoldia magna (strain ATCC 29328 / DSM 20472 / WAL 2508)</name>
    <name type="common">Peptostreptococcus magnus</name>
    <dbReference type="NCBI Taxonomy" id="334413"/>
    <lineage>
        <taxon>Bacteria</taxon>
        <taxon>Bacillati</taxon>
        <taxon>Bacillota</taxon>
        <taxon>Tissierellia</taxon>
        <taxon>Tissierellales</taxon>
        <taxon>Peptoniphilaceae</taxon>
        <taxon>Finegoldia</taxon>
    </lineage>
</organism>
<comment type="similarity">
    <text evidence="1">Belongs to the universal ribosomal protein uS9 family.</text>
</comment>
<sequence>MANNRYQGTGRRKTSVARVTLVPGSGKFTINKKDISEYFNFDTLRVIAKEALELTNNAESYDVTVNVKGGGYTGQAGAIRHGVARALLEVDPDYRAELKRAGFLTRDPRKKERKKYGLKKARKSPQFSKR</sequence>
<keyword id="KW-1185">Reference proteome</keyword>
<keyword id="KW-0687">Ribonucleoprotein</keyword>
<keyword id="KW-0689">Ribosomal protein</keyword>